<organism>
    <name type="scientific">Arabidopsis thaliana</name>
    <name type="common">Mouse-ear cress</name>
    <dbReference type="NCBI Taxonomy" id="3702"/>
    <lineage>
        <taxon>Eukaryota</taxon>
        <taxon>Viridiplantae</taxon>
        <taxon>Streptophyta</taxon>
        <taxon>Embryophyta</taxon>
        <taxon>Tracheophyta</taxon>
        <taxon>Spermatophyta</taxon>
        <taxon>Magnoliopsida</taxon>
        <taxon>eudicotyledons</taxon>
        <taxon>Gunneridae</taxon>
        <taxon>Pentapetalae</taxon>
        <taxon>rosids</taxon>
        <taxon>malvids</taxon>
        <taxon>Brassicales</taxon>
        <taxon>Brassicaceae</taxon>
        <taxon>Camelineae</taxon>
        <taxon>Arabidopsis</taxon>
    </lineage>
</organism>
<feature type="chain" id="PRO_0000419942" description="Protein GLUTAMINE DUMPER 4">
    <location>
        <begin position="1"/>
        <end position="156"/>
    </location>
</feature>
<feature type="topological domain" description="Extracellular" evidence="2">
    <location>
        <begin position="1"/>
        <end position="39"/>
    </location>
</feature>
<feature type="transmembrane region" description="Helical" evidence="2">
    <location>
        <begin position="40"/>
        <end position="60"/>
    </location>
</feature>
<feature type="topological domain" description="Cytoplasmic" evidence="2">
    <location>
        <begin position="61"/>
        <end position="156"/>
    </location>
</feature>
<feature type="region of interest" description="Disordered" evidence="3">
    <location>
        <begin position="67"/>
        <end position="87"/>
    </location>
</feature>
<feature type="region of interest" description="Disordered" evidence="3">
    <location>
        <begin position="136"/>
        <end position="156"/>
    </location>
</feature>
<feature type="short sequence motif" description="VIMAG">
    <location>
        <begin position="99"/>
        <end position="103"/>
    </location>
</feature>
<feature type="compositionally biased region" description="Basic and acidic residues" evidence="3">
    <location>
        <begin position="72"/>
        <end position="84"/>
    </location>
</feature>
<name>GDU4_ARATH</name>
<keyword id="KW-0029">Amino-acid transport</keyword>
<keyword id="KW-0472">Membrane</keyword>
<keyword id="KW-1185">Reference proteome</keyword>
<keyword id="KW-0812">Transmembrane</keyword>
<keyword id="KW-1133">Transmembrane helix</keyword>
<keyword id="KW-0813">Transport</keyword>
<dbReference type="EMBL" id="AC007266">
    <property type="protein sequence ID" value="AAM15477.1"/>
    <property type="molecule type" value="Genomic_DNA"/>
</dbReference>
<dbReference type="EMBL" id="CP002685">
    <property type="protein sequence ID" value="AEC07624.1"/>
    <property type="molecule type" value="Genomic_DNA"/>
</dbReference>
<dbReference type="EMBL" id="BT024696">
    <property type="protein sequence ID" value="ABD57521.1"/>
    <property type="molecule type" value="mRNA"/>
</dbReference>
<dbReference type="RefSeq" id="NP_565577.1">
    <property type="nucleotide sequence ID" value="NM_128035.5"/>
</dbReference>
<dbReference type="SMR" id="Q8S8A0"/>
<dbReference type="BioGRID" id="2365">
    <property type="interactions" value="21"/>
</dbReference>
<dbReference type="FunCoup" id="Q8S8A0">
    <property type="interactions" value="1"/>
</dbReference>
<dbReference type="IntAct" id="Q8S8A0">
    <property type="interactions" value="22"/>
</dbReference>
<dbReference type="MINT" id="Q8S8A0"/>
<dbReference type="STRING" id="3702.Q8S8A0"/>
<dbReference type="PaxDb" id="3702-AT2G24762.1"/>
<dbReference type="ProteomicsDB" id="247126"/>
<dbReference type="EnsemblPlants" id="AT2G24762.1">
    <property type="protein sequence ID" value="AT2G24762.1"/>
    <property type="gene ID" value="AT2G24762"/>
</dbReference>
<dbReference type="GeneID" id="817013"/>
<dbReference type="Gramene" id="AT2G24762.1">
    <property type="protein sequence ID" value="AT2G24762.1"/>
    <property type="gene ID" value="AT2G24762"/>
</dbReference>
<dbReference type="KEGG" id="ath:AT2G24762"/>
<dbReference type="Araport" id="AT2G24762"/>
<dbReference type="TAIR" id="AT2G24762">
    <property type="gene designation" value="GDU4"/>
</dbReference>
<dbReference type="eggNOG" id="ENOG502S4AK">
    <property type="taxonomic scope" value="Eukaryota"/>
</dbReference>
<dbReference type="HOGENOM" id="CLU_112624_2_1_1"/>
<dbReference type="InParanoid" id="Q8S8A0"/>
<dbReference type="OMA" id="TPAANKC"/>
<dbReference type="OrthoDB" id="1930784at2759"/>
<dbReference type="PhylomeDB" id="Q8S8A0"/>
<dbReference type="PRO" id="PR:Q8S8A0"/>
<dbReference type="Proteomes" id="UP000006548">
    <property type="component" value="Chromosome 2"/>
</dbReference>
<dbReference type="ExpressionAtlas" id="Q8S8A0">
    <property type="expression patterns" value="baseline and differential"/>
</dbReference>
<dbReference type="GO" id="GO:0016020">
    <property type="term" value="C:membrane"/>
    <property type="evidence" value="ECO:0007669"/>
    <property type="project" value="UniProtKB-SubCell"/>
</dbReference>
<dbReference type="GO" id="GO:0006865">
    <property type="term" value="P:amino acid transport"/>
    <property type="evidence" value="ECO:0007669"/>
    <property type="project" value="UniProtKB-KW"/>
</dbReference>
<dbReference type="GO" id="GO:0080143">
    <property type="term" value="P:regulation of amino acid export"/>
    <property type="evidence" value="ECO:0000315"/>
    <property type="project" value="TAIR"/>
</dbReference>
<dbReference type="InterPro" id="IPR040359">
    <property type="entry name" value="GDU"/>
</dbReference>
<dbReference type="PANTHER" id="PTHR33228:SF67">
    <property type="entry name" value="PROTEIN GLUTAMINE DUMPER 4"/>
    <property type="match status" value="1"/>
</dbReference>
<dbReference type="PANTHER" id="PTHR33228">
    <property type="entry name" value="PROTEIN GLUTAMINE DUMPER 4-RELATED"/>
    <property type="match status" value="1"/>
</dbReference>
<protein>
    <recommendedName>
        <fullName>Protein GLUTAMINE DUMPER 4</fullName>
    </recommendedName>
</protein>
<comment type="function">
    <text evidence="4 5">Probable subunit of an amino acid transporter involved in the regulation of the amino acid metabolism. Stimulates amino acid export by activating nonselective amino acid facilitators.</text>
</comment>
<comment type="subcellular location">
    <subcellularLocation>
        <location evidence="5">Membrane</location>
        <topology evidence="5">Single-pass membrane protein</topology>
    </subcellularLocation>
</comment>
<comment type="tissue specificity">
    <text evidence="4 5">Expressed in the vascular tissues, even in the minor veins of the leaves.</text>
</comment>
<comment type="domain">
    <text evidence="1">The VIMAG motif is necessary for the function of the protein.</text>
</comment>
<comment type="miscellaneous">
    <text>Overexpression of GLUTAMINE DUMPER 4 leads to free amino acid levels accumulation (PubMed:20018597, Ref.7).</text>
</comment>
<comment type="similarity">
    <text evidence="6">Belongs to the GLUTAMINE DUMPER 1 (TC 9.B.60) family.</text>
</comment>
<accession>Q8S8A0</accession>
<evidence type="ECO:0000250" key="1"/>
<evidence type="ECO:0000255" key="2"/>
<evidence type="ECO:0000256" key="3">
    <source>
        <dbReference type="SAM" id="MobiDB-lite"/>
    </source>
</evidence>
<evidence type="ECO:0000269" key="4">
    <source>
    </source>
</evidence>
<evidence type="ECO:0000269" key="5">
    <source ref="7"/>
</evidence>
<evidence type="ECO:0000305" key="6"/>
<sequence length="156" mass="16851">MRPLSIKPTSLDVARHATSVESFGNHRPPISPWHSPVPYLFGGLAAMLGLIAFALLILACSYWRLSTSGDDSGERVDEEKESRSGVKAASAACEEKVLVIMAGDDLPRFLATPAANKCMCGHEGRMVIFKEDGIGAGEEKMGDREKAKENEETTSQ</sequence>
<reference key="1">
    <citation type="journal article" date="1999" name="Nature">
        <title>Sequence and analysis of chromosome 2 of the plant Arabidopsis thaliana.</title>
        <authorList>
            <person name="Lin X."/>
            <person name="Kaul S."/>
            <person name="Rounsley S.D."/>
            <person name="Shea T.P."/>
            <person name="Benito M.-I."/>
            <person name="Town C.D."/>
            <person name="Fujii C.Y."/>
            <person name="Mason T.M."/>
            <person name="Bowman C.L."/>
            <person name="Barnstead M.E."/>
            <person name="Feldblyum T.V."/>
            <person name="Buell C.R."/>
            <person name="Ketchum K.A."/>
            <person name="Lee J.J."/>
            <person name="Ronning C.M."/>
            <person name="Koo H.L."/>
            <person name="Moffat K.S."/>
            <person name="Cronin L.A."/>
            <person name="Shen M."/>
            <person name="Pai G."/>
            <person name="Van Aken S."/>
            <person name="Umayam L."/>
            <person name="Tallon L.J."/>
            <person name="Gill J.E."/>
            <person name="Adams M.D."/>
            <person name="Carrera A.J."/>
            <person name="Creasy T.H."/>
            <person name="Goodman H.M."/>
            <person name="Somerville C.R."/>
            <person name="Copenhaver G.P."/>
            <person name="Preuss D."/>
            <person name="Nierman W.C."/>
            <person name="White O."/>
            <person name="Eisen J.A."/>
            <person name="Salzberg S.L."/>
            <person name="Fraser C.M."/>
            <person name="Venter J.C."/>
        </authorList>
    </citation>
    <scope>NUCLEOTIDE SEQUENCE [LARGE SCALE GENOMIC DNA]</scope>
    <source>
        <strain>cv. Columbia</strain>
    </source>
</reference>
<reference key="2">
    <citation type="journal article" date="2017" name="Plant J.">
        <title>Araport11: a complete reannotation of the Arabidopsis thaliana reference genome.</title>
        <authorList>
            <person name="Cheng C.Y."/>
            <person name="Krishnakumar V."/>
            <person name="Chan A.P."/>
            <person name="Thibaud-Nissen F."/>
            <person name="Schobel S."/>
            <person name="Town C.D."/>
        </authorList>
    </citation>
    <scope>GENOME REANNOTATION</scope>
    <source>
        <strain>cv. Columbia</strain>
    </source>
</reference>
<reference key="3">
    <citation type="submission" date="2006-02" db="EMBL/GenBank/DDBJ databases">
        <title>Arabidopsis ORF clones.</title>
        <authorList>
            <person name="Kim C.J."/>
            <person name="Chen H."/>
            <person name="Shinn P."/>
            <person name="Ecker J.R."/>
        </authorList>
    </citation>
    <scope>NUCLEOTIDE SEQUENCE [LARGE SCALE MRNA]</scope>
    <source>
        <strain>cv. Columbia</strain>
    </source>
</reference>
<reference key="4">
    <citation type="journal article" date="2004" name="Plant Cell">
        <title>Overexpression of GLUTAMINE DUMPER1 leads to hypersecretion of glutamine from hydathodes of Arabidopsis leaves.</title>
        <authorList>
            <person name="Pilot G."/>
            <person name="Stransky H."/>
            <person name="Bushey D.F."/>
            <person name="Pratelli R."/>
            <person name="Ludewig U."/>
            <person name="Wingate V.P."/>
            <person name="Frommer W.B."/>
        </authorList>
    </citation>
    <scope>GENE FAMILY</scope>
</reference>
<reference key="5">
    <citation type="journal article" date="2006" name="FEBS Lett.">
        <title>The plant-specific VIMAG domain of Glutamine Dumper1 is necessary for the function of the protein in Arabidopsis.</title>
        <authorList>
            <person name="Pratelli R."/>
            <person name="Pilot G."/>
        </authorList>
    </citation>
    <scope>GENE FAMILY</scope>
</reference>
<reference key="6">
    <citation type="journal article" date="2007" name="FEBS Lett.">
        <authorList>
            <person name="Pratelli R."/>
            <person name="Pilot G."/>
        </authorList>
    </citation>
    <scope>ERRATUM OF PUBMED:17157837</scope>
</reference>
<reference key="7">
    <citation type="book" date="2008" name="Proceedings of the 19th international conference on Arabidopsis research">
        <title>The over-expression of GDU-like genes leads to modification in amino acid content and transport.</title>
        <authorList>
            <person name="Pratelli R."/>
            <person name="Frommer W.B."/>
            <person name="Pilot G."/>
        </authorList>
    </citation>
    <scope>FUNCTION</scope>
    <scope>TISSUE SPECIFICITY</scope>
    <scope>SUBCELLULAR LOCATION</scope>
</reference>
<reference key="8">
    <citation type="journal article" date="2010" name="Plant Physiol.">
        <title>Stimulation of nonselective amino acid export by glutamine dumper proteins.</title>
        <authorList>
            <person name="Pratelli R."/>
            <person name="Voll L.M."/>
            <person name="Horst R.J."/>
            <person name="Frommer W.B."/>
            <person name="Pilot G."/>
        </authorList>
    </citation>
    <scope>FUNCTION</scope>
    <scope>TISSUE SPECIFICITY</scope>
</reference>
<gene>
    <name type="primary">GDU4</name>
    <name type="ordered locus">At2g24762</name>
    <name type="ORF">F27A10.11</name>
</gene>
<proteinExistence type="evidence at transcript level"/>